<comment type="function">
    <text evidence="1">The glycine cleavage system catalyzes the degradation of glycine.</text>
</comment>
<comment type="catalytic activity">
    <reaction evidence="1">
        <text>N(6)-[(R)-S(8)-aminomethyldihydrolipoyl]-L-lysyl-[protein] + (6S)-5,6,7,8-tetrahydrofolate = N(6)-[(R)-dihydrolipoyl]-L-lysyl-[protein] + (6R)-5,10-methylene-5,6,7,8-tetrahydrofolate + NH4(+)</text>
        <dbReference type="Rhea" id="RHEA:16945"/>
        <dbReference type="Rhea" id="RHEA-COMP:10475"/>
        <dbReference type="Rhea" id="RHEA-COMP:10492"/>
        <dbReference type="ChEBI" id="CHEBI:15636"/>
        <dbReference type="ChEBI" id="CHEBI:28938"/>
        <dbReference type="ChEBI" id="CHEBI:57453"/>
        <dbReference type="ChEBI" id="CHEBI:83100"/>
        <dbReference type="ChEBI" id="CHEBI:83143"/>
        <dbReference type="EC" id="2.1.2.10"/>
    </reaction>
</comment>
<comment type="subunit">
    <text evidence="1">The glycine cleavage system is composed of four proteins: P, T, L and H.</text>
</comment>
<comment type="similarity">
    <text evidence="1">Belongs to the GcvT family.</text>
</comment>
<keyword id="KW-0032">Aminotransferase</keyword>
<keyword id="KW-0808">Transferase</keyword>
<protein>
    <recommendedName>
        <fullName evidence="1">Aminomethyltransferase</fullName>
        <ecNumber evidence="1">2.1.2.10</ecNumber>
    </recommendedName>
    <alternativeName>
        <fullName evidence="1">Glycine cleavage system T protein</fullName>
    </alternativeName>
</protein>
<proteinExistence type="inferred from homology"/>
<feature type="chain" id="PRO_1000204640" description="Aminomethyltransferase">
    <location>
        <begin position="1"/>
        <end position="362"/>
    </location>
</feature>
<accession>C1L2Q4</accession>
<dbReference type="EC" id="2.1.2.10" evidence="1"/>
<dbReference type="EMBL" id="FM242711">
    <property type="protein sequence ID" value="CAS05120.1"/>
    <property type="molecule type" value="Genomic_DNA"/>
</dbReference>
<dbReference type="RefSeq" id="WP_012681280.1">
    <property type="nucleotide sequence ID" value="NC_012488.1"/>
</dbReference>
<dbReference type="SMR" id="C1L2Q4"/>
<dbReference type="KEGG" id="lmc:Lm4b_01356"/>
<dbReference type="HOGENOM" id="CLU_007884_10_2_9"/>
<dbReference type="GO" id="GO:0005829">
    <property type="term" value="C:cytosol"/>
    <property type="evidence" value="ECO:0007669"/>
    <property type="project" value="TreeGrafter"/>
</dbReference>
<dbReference type="GO" id="GO:0005960">
    <property type="term" value="C:glycine cleavage complex"/>
    <property type="evidence" value="ECO:0007669"/>
    <property type="project" value="InterPro"/>
</dbReference>
<dbReference type="GO" id="GO:0004047">
    <property type="term" value="F:aminomethyltransferase activity"/>
    <property type="evidence" value="ECO:0007669"/>
    <property type="project" value="UniProtKB-UniRule"/>
</dbReference>
<dbReference type="GO" id="GO:0008483">
    <property type="term" value="F:transaminase activity"/>
    <property type="evidence" value="ECO:0007669"/>
    <property type="project" value="UniProtKB-KW"/>
</dbReference>
<dbReference type="GO" id="GO:0019464">
    <property type="term" value="P:glycine decarboxylation via glycine cleavage system"/>
    <property type="evidence" value="ECO:0007669"/>
    <property type="project" value="UniProtKB-UniRule"/>
</dbReference>
<dbReference type="FunFam" id="2.40.30.110:FF:000003">
    <property type="entry name" value="Aminomethyltransferase"/>
    <property type="match status" value="1"/>
</dbReference>
<dbReference type="FunFam" id="3.30.70.1400:FF:000001">
    <property type="entry name" value="Aminomethyltransferase"/>
    <property type="match status" value="1"/>
</dbReference>
<dbReference type="FunFam" id="4.10.1250.10:FF:000001">
    <property type="entry name" value="Aminomethyltransferase"/>
    <property type="match status" value="1"/>
</dbReference>
<dbReference type="Gene3D" id="2.40.30.110">
    <property type="entry name" value="Aminomethyltransferase beta-barrel domains"/>
    <property type="match status" value="1"/>
</dbReference>
<dbReference type="Gene3D" id="3.30.70.1400">
    <property type="entry name" value="Aminomethyltransferase beta-barrel domains"/>
    <property type="match status" value="1"/>
</dbReference>
<dbReference type="Gene3D" id="4.10.1250.10">
    <property type="entry name" value="Aminomethyltransferase fragment"/>
    <property type="match status" value="1"/>
</dbReference>
<dbReference type="Gene3D" id="3.30.1360.120">
    <property type="entry name" value="Probable tRNA modification gtpase trme, domain 1"/>
    <property type="match status" value="1"/>
</dbReference>
<dbReference type="HAMAP" id="MF_00259">
    <property type="entry name" value="GcvT"/>
    <property type="match status" value="1"/>
</dbReference>
<dbReference type="InterPro" id="IPR006223">
    <property type="entry name" value="GCS_T"/>
</dbReference>
<dbReference type="InterPro" id="IPR022903">
    <property type="entry name" value="GCS_T_bac"/>
</dbReference>
<dbReference type="InterPro" id="IPR013977">
    <property type="entry name" value="GCST_C"/>
</dbReference>
<dbReference type="InterPro" id="IPR006222">
    <property type="entry name" value="GCV_T_N"/>
</dbReference>
<dbReference type="InterPro" id="IPR028896">
    <property type="entry name" value="GcvT/YgfZ/DmdA"/>
</dbReference>
<dbReference type="InterPro" id="IPR029043">
    <property type="entry name" value="GcvT/YgfZ_C"/>
</dbReference>
<dbReference type="InterPro" id="IPR027266">
    <property type="entry name" value="TrmE/GcvT_dom1"/>
</dbReference>
<dbReference type="NCBIfam" id="TIGR00528">
    <property type="entry name" value="gcvT"/>
    <property type="match status" value="1"/>
</dbReference>
<dbReference type="NCBIfam" id="NF001567">
    <property type="entry name" value="PRK00389.1"/>
    <property type="match status" value="1"/>
</dbReference>
<dbReference type="PANTHER" id="PTHR43757">
    <property type="entry name" value="AMINOMETHYLTRANSFERASE"/>
    <property type="match status" value="1"/>
</dbReference>
<dbReference type="PANTHER" id="PTHR43757:SF2">
    <property type="entry name" value="AMINOMETHYLTRANSFERASE, MITOCHONDRIAL"/>
    <property type="match status" value="1"/>
</dbReference>
<dbReference type="Pfam" id="PF01571">
    <property type="entry name" value="GCV_T"/>
    <property type="match status" value="1"/>
</dbReference>
<dbReference type="Pfam" id="PF08669">
    <property type="entry name" value="GCV_T_C"/>
    <property type="match status" value="1"/>
</dbReference>
<dbReference type="PIRSF" id="PIRSF006487">
    <property type="entry name" value="GcvT"/>
    <property type="match status" value="1"/>
</dbReference>
<dbReference type="SUPFAM" id="SSF101790">
    <property type="entry name" value="Aminomethyltransferase beta-barrel domain"/>
    <property type="match status" value="1"/>
</dbReference>
<dbReference type="SUPFAM" id="SSF103025">
    <property type="entry name" value="Folate-binding domain"/>
    <property type="match status" value="1"/>
</dbReference>
<organism>
    <name type="scientific">Listeria monocytogenes serotype 4b (strain CLIP80459)</name>
    <dbReference type="NCBI Taxonomy" id="568819"/>
    <lineage>
        <taxon>Bacteria</taxon>
        <taxon>Bacillati</taxon>
        <taxon>Bacillota</taxon>
        <taxon>Bacilli</taxon>
        <taxon>Bacillales</taxon>
        <taxon>Listeriaceae</taxon>
        <taxon>Listeria</taxon>
    </lineage>
</organism>
<evidence type="ECO:0000255" key="1">
    <source>
        <dbReference type="HAMAP-Rule" id="MF_00259"/>
    </source>
</evidence>
<name>GCST_LISMC</name>
<reference key="1">
    <citation type="journal article" date="2012" name="BMC Genomics">
        <title>Comparative genomics and transcriptomics of lineages I, II, and III strains of Listeria monocytogenes.</title>
        <authorList>
            <person name="Hain T."/>
            <person name="Ghai R."/>
            <person name="Billion A."/>
            <person name="Kuenne C.T."/>
            <person name="Steinweg C."/>
            <person name="Izar B."/>
            <person name="Mohamed W."/>
            <person name="Mraheil M."/>
            <person name="Domann E."/>
            <person name="Schaffrath S."/>
            <person name="Karst U."/>
            <person name="Goesmann A."/>
            <person name="Oehm S."/>
            <person name="Puhler A."/>
            <person name="Merkl R."/>
            <person name="Vorwerk S."/>
            <person name="Glaser P."/>
            <person name="Garrido P."/>
            <person name="Rusniok C."/>
            <person name="Buchrieser C."/>
            <person name="Goebel W."/>
            <person name="Chakraborty T."/>
        </authorList>
    </citation>
    <scope>NUCLEOTIDE SEQUENCE [LARGE SCALE GENOMIC DNA]</scope>
    <source>
        <strain>CLIP80459</strain>
    </source>
</reference>
<sequence length="362" mass="39564">MTELLKTPIHPLYAKYGAKTIDFGGWDLPVQFAGIKAEHEAVRTDAGLFDVSHMGEILVKGPDSTSYLQYLLTNDIEKIKIGKAQYNIMCYETGGTVDDLVVYKKSETEYILVVNAANTDKDFEWMVKNIRGDVSVTNVSSEYGQLALQGPNAEKILAKLTDVDLSSISFFGFVEDADVAGVKTIISRSGYTGEDGFEIYMPSADAGKVFEAILAEGVAPIGLGARDTLRLEAVLALYGQELSKDITPLEAGLNFAVKLKKEADFIGKEALIKQKEVGLNRKLVGIELIERGIPRHDYPVFLNEEEIGIVTSGTQSPTLGTNIGLALIDTAYTEIGQEVEVGIRNKKVKAKIVPTPFYKRAK</sequence>
<gene>
    <name evidence="1" type="primary">gcvT</name>
    <name type="ordered locus">Lm4b_01356</name>
</gene>